<dbReference type="EC" id="2.7.1.40"/>
<dbReference type="EMBL" id="AB009055">
    <property type="protein sequence ID" value="BAB10440.1"/>
    <property type="molecule type" value="Genomic_DNA"/>
</dbReference>
<dbReference type="EMBL" id="CP002688">
    <property type="protein sequence ID" value="AED96278.1"/>
    <property type="molecule type" value="Genomic_DNA"/>
</dbReference>
<dbReference type="EMBL" id="AY048198">
    <property type="protein sequence ID" value="AAK82461.1"/>
    <property type="molecule type" value="mRNA"/>
</dbReference>
<dbReference type="EMBL" id="AY091682">
    <property type="protein sequence ID" value="AAM10281.1"/>
    <property type="molecule type" value="mRNA"/>
</dbReference>
<dbReference type="EMBL" id="AK220807">
    <property type="protein sequence ID" value="BAD94078.1"/>
    <property type="molecule type" value="mRNA"/>
</dbReference>
<dbReference type="EMBL" id="AK220873">
    <property type="protein sequence ID" value="BAD94256.1"/>
    <property type="molecule type" value="mRNA"/>
</dbReference>
<dbReference type="EMBL" id="AK221740">
    <property type="protein sequence ID" value="BAD93771.1"/>
    <property type="molecule type" value="mRNA"/>
</dbReference>
<dbReference type="EMBL" id="AY084507">
    <property type="protein sequence ID" value="AAM61075.1"/>
    <property type="molecule type" value="mRNA"/>
</dbReference>
<dbReference type="RefSeq" id="NP_200104.1">
    <property type="nucleotide sequence ID" value="NM_124670.3"/>
</dbReference>
<dbReference type="SMR" id="Q9FLW9"/>
<dbReference type="FunCoup" id="Q9FLW9">
    <property type="interactions" value="899"/>
</dbReference>
<dbReference type="STRING" id="3702.Q9FLW9"/>
<dbReference type="GlyGen" id="Q9FLW9">
    <property type="glycosylation" value="1 site"/>
</dbReference>
<dbReference type="iPTMnet" id="Q9FLW9"/>
<dbReference type="PaxDb" id="3702-AT5G52920.1"/>
<dbReference type="ProteomicsDB" id="234915"/>
<dbReference type="EnsemblPlants" id="AT5G52920.1">
    <property type="protein sequence ID" value="AT5G52920.1"/>
    <property type="gene ID" value="AT5G52920"/>
</dbReference>
<dbReference type="GeneID" id="835369"/>
<dbReference type="Gramene" id="AT5G52920.1">
    <property type="protein sequence ID" value="AT5G52920.1"/>
    <property type="gene ID" value="AT5G52920"/>
</dbReference>
<dbReference type="KEGG" id="ath:AT5G52920"/>
<dbReference type="Araport" id="AT5G52920"/>
<dbReference type="TAIR" id="AT5G52920">
    <property type="gene designation" value="PKP-BETA1"/>
</dbReference>
<dbReference type="eggNOG" id="KOG2323">
    <property type="taxonomic scope" value="Eukaryota"/>
</dbReference>
<dbReference type="HOGENOM" id="CLU_015439_3_2_1"/>
<dbReference type="InParanoid" id="Q9FLW9"/>
<dbReference type="OMA" id="HQISALW"/>
<dbReference type="OrthoDB" id="108365at2759"/>
<dbReference type="PhylomeDB" id="Q9FLW9"/>
<dbReference type="SABIO-RK" id="Q9FLW9"/>
<dbReference type="UniPathway" id="UPA00109">
    <property type="reaction ID" value="UER00188"/>
</dbReference>
<dbReference type="CD-CODE" id="4299E36E">
    <property type="entry name" value="Nucleolus"/>
</dbReference>
<dbReference type="PRO" id="PR:Q9FLW9"/>
<dbReference type="Proteomes" id="UP000006548">
    <property type="component" value="Chromosome 5"/>
</dbReference>
<dbReference type="ExpressionAtlas" id="Q9FLW9">
    <property type="expression patterns" value="baseline and differential"/>
</dbReference>
<dbReference type="GO" id="GO:0009507">
    <property type="term" value="C:chloroplast"/>
    <property type="evidence" value="ECO:0000314"/>
    <property type="project" value="TAIR"/>
</dbReference>
<dbReference type="GO" id="GO:0009570">
    <property type="term" value="C:chloroplast stroma"/>
    <property type="evidence" value="ECO:0000314"/>
    <property type="project" value="TAIR"/>
</dbReference>
<dbReference type="GO" id="GO:0005739">
    <property type="term" value="C:mitochondrion"/>
    <property type="evidence" value="ECO:0000314"/>
    <property type="project" value="TAIR"/>
</dbReference>
<dbReference type="GO" id="GO:0005524">
    <property type="term" value="F:ATP binding"/>
    <property type="evidence" value="ECO:0007669"/>
    <property type="project" value="UniProtKB-KW"/>
</dbReference>
<dbReference type="GO" id="GO:0016301">
    <property type="term" value="F:kinase activity"/>
    <property type="evidence" value="ECO:0007669"/>
    <property type="project" value="UniProtKB-KW"/>
</dbReference>
<dbReference type="GO" id="GO:0000287">
    <property type="term" value="F:magnesium ion binding"/>
    <property type="evidence" value="ECO:0000314"/>
    <property type="project" value="UniProtKB"/>
</dbReference>
<dbReference type="GO" id="GO:0030955">
    <property type="term" value="F:potassium ion binding"/>
    <property type="evidence" value="ECO:0000314"/>
    <property type="project" value="UniProtKB"/>
</dbReference>
<dbReference type="GO" id="GO:0004743">
    <property type="term" value="F:pyruvate kinase activity"/>
    <property type="evidence" value="ECO:0000314"/>
    <property type="project" value="TAIR"/>
</dbReference>
<dbReference type="GO" id="GO:0006633">
    <property type="term" value="P:fatty acid biosynthetic process"/>
    <property type="evidence" value="ECO:0000315"/>
    <property type="project" value="TAIR"/>
</dbReference>
<dbReference type="GO" id="GO:0006629">
    <property type="term" value="P:lipid metabolic process"/>
    <property type="evidence" value="ECO:0000316"/>
    <property type="project" value="TAIR"/>
</dbReference>
<dbReference type="GO" id="GO:0048316">
    <property type="term" value="P:seed development"/>
    <property type="evidence" value="ECO:0000315"/>
    <property type="project" value="TAIR"/>
</dbReference>
<dbReference type="GO" id="GO:0010431">
    <property type="term" value="P:seed maturation"/>
    <property type="evidence" value="ECO:0000315"/>
    <property type="project" value="UniProtKB"/>
</dbReference>
<dbReference type="FunFam" id="2.40.33.10:FF:000003">
    <property type="entry name" value="Pyruvate kinase"/>
    <property type="match status" value="1"/>
</dbReference>
<dbReference type="FunFam" id="3.20.20.60:FF:000025">
    <property type="entry name" value="Pyruvate kinase"/>
    <property type="match status" value="1"/>
</dbReference>
<dbReference type="FunFam" id="3.40.1380.20:FF:000008">
    <property type="entry name" value="Pyruvate kinase"/>
    <property type="match status" value="1"/>
</dbReference>
<dbReference type="Gene3D" id="3.20.20.60">
    <property type="entry name" value="Phosphoenolpyruvate-binding domains"/>
    <property type="match status" value="1"/>
</dbReference>
<dbReference type="Gene3D" id="2.40.33.10">
    <property type="entry name" value="PK beta-barrel domain-like"/>
    <property type="match status" value="1"/>
</dbReference>
<dbReference type="Gene3D" id="3.40.1380.20">
    <property type="entry name" value="Pyruvate kinase, C-terminal domain"/>
    <property type="match status" value="1"/>
</dbReference>
<dbReference type="InterPro" id="IPR001697">
    <property type="entry name" value="Pyr_Knase"/>
</dbReference>
<dbReference type="InterPro" id="IPR015813">
    <property type="entry name" value="Pyrv/PenolPyrv_kinase-like_dom"/>
</dbReference>
<dbReference type="InterPro" id="IPR040442">
    <property type="entry name" value="Pyrv_kinase-like_dom_sf"/>
</dbReference>
<dbReference type="InterPro" id="IPR011037">
    <property type="entry name" value="Pyrv_Knase-like_insert_dom_sf"/>
</dbReference>
<dbReference type="InterPro" id="IPR018209">
    <property type="entry name" value="Pyrv_Knase_AS"/>
</dbReference>
<dbReference type="InterPro" id="IPR015793">
    <property type="entry name" value="Pyrv_Knase_brl"/>
</dbReference>
<dbReference type="InterPro" id="IPR015795">
    <property type="entry name" value="Pyrv_Knase_C"/>
</dbReference>
<dbReference type="InterPro" id="IPR036918">
    <property type="entry name" value="Pyrv_Knase_C_sf"/>
</dbReference>
<dbReference type="InterPro" id="IPR015806">
    <property type="entry name" value="Pyrv_Knase_insert_dom_sf"/>
</dbReference>
<dbReference type="NCBIfam" id="NF004491">
    <property type="entry name" value="PRK05826.1"/>
    <property type="match status" value="1"/>
</dbReference>
<dbReference type="NCBIfam" id="TIGR01064">
    <property type="entry name" value="pyruv_kin"/>
    <property type="match status" value="1"/>
</dbReference>
<dbReference type="PANTHER" id="PTHR11817">
    <property type="entry name" value="PYRUVATE KINASE"/>
    <property type="match status" value="1"/>
</dbReference>
<dbReference type="Pfam" id="PF00224">
    <property type="entry name" value="PK"/>
    <property type="match status" value="1"/>
</dbReference>
<dbReference type="Pfam" id="PF02887">
    <property type="entry name" value="PK_C"/>
    <property type="match status" value="1"/>
</dbReference>
<dbReference type="PRINTS" id="PR01050">
    <property type="entry name" value="PYRUVTKNASE"/>
</dbReference>
<dbReference type="SUPFAM" id="SSF51621">
    <property type="entry name" value="Phosphoenolpyruvate/pyruvate domain"/>
    <property type="match status" value="1"/>
</dbReference>
<dbReference type="SUPFAM" id="SSF50800">
    <property type="entry name" value="PK beta-barrel domain-like"/>
    <property type="match status" value="1"/>
</dbReference>
<dbReference type="SUPFAM" id="SSF52935">
    <property type="entry name" value="PK C-terminal domain-like"/>
    <property type="match status" value="1"/>
</dbReference>
<dbReference type="PROSITE" id="PS00110">
    <property type="entry name" value="PYRUVATE_KINASE"/>
    <property type="match status" value="1"/>
</dbReference>
<organism>
    <name type="scientific">Arabidopsis thaliana</name>
    <name type="common">Mouse-ear cress</name>
    <dbReference type="NCBI Taxonomy" id="3702"/>
    <lineage>
        <taxon>Eukaryota</taxon>
        <taxon>Viridiplantae</taxon>
        <taxon>Streptophyta</taxon>
        <taxon>Embryophyta</taxon>
        <taxon>Tracheophyta</taxon>
        <taxon>Spermatophyta</taxon>
        <taxon>Magnoliopsida</taxon>
        <taxon>eudicotyledons</taxon>
        <taxon>Gunneridae</taxon>
        <taxon>Pentapetalae</taxon>
        <taxon>rosids</taxon>
        <taxon>malvids</taxon>
        <taxon>Brassicales</taxon>
        <taxon>Brassicaceae</taxon>
        <taxon>Camelineae</taxon>
        <taxon>Arabidopsis</taxon>
    </lineage>
</organism>
<comment type="function">
    <text evidence="7 8 9">Required for plastidial pyruvate kinase activity. Involved in seed oil accumulation, embryo development and seed storage compounds mobilization upon germination.</text>
</comment>
<comment type="catalytic activity">
    <reaction>
        <text>pyruvate + ATP = phosphoenolpyruvate + ADP + H(+)</text>
        <dbReference type="Rhea" id="RHEA:18157"/>
        <dbReference type="ChEBI" id="CHEBI:15361"/>
        <dbReference type="ChEBI" id="CHEBI:15378"/>
        <dbReference type="ChEBI" id="CHEBI:30616"/>
        <dbReference type="ChEBI" id="CHEBI:58702"/>
        <dbReference type="ChEBI" id="CHEBI:456216"/>
        <dbReference type="EC" id="2.7.1.40"/>
    </reaction>
</comment>
<comment type="cofactor">
    <cofactor evidence="7">
        <name>Mg(2+)</name>
        <dbReference type="ChEBI" id="CHEBI:18420"/>
    </cofactor>
</comment>
<comment type="cofactor">
    <cofactor evidence="7">
        <name>K(+)</name>
        <dbReference type="ChEBI" id="CHEBI:29103"/>
    </cofactor>
</comment>
<comment type="biophysicochemical properties">
    <phDependence>
        <text evidence="7 8">Optimum pH is 7.8-8.0.</text>
    </phDependence>
</comment>
<comment type="pathway">
    <text>Carbohydrate degradation; glycolysis; pyruvate from D-glyceraldehyde 3-phosphate: step 5/5.</text>
</comment>
<comment type="subunit">
    <text evidence="7">Oligomer of alpha and beta subunits.</text>
</comment>
<comment type="subcellular location">
    <subcellularLocation>
        <location evidence="10">Plastid</location>
        <location evidence="10">Chloroplast stroma</location>
    </subcellularLocation>
    <subcellularLocation>
        <location evidence="6">Mitochondrion</location>
    </subcellularLocation>
</comment>
<comment type="tissue specificity">
    <text evidence="7 8">Mostly expressed in seeds, and, to a lower extent, in roots, leaves (veins and trichomes), inflorescences, siliques, pollen (grains and tubes) and flowers (sepals and petals).</text>
</comment>
<comment type="developmental stage">
    <text evidence="8">In seeds, accumulates in endosperm and embryo. In torpedo-shaped embryos, restricted to the hypocotyl and in the outer parts of the young cotyledons. In later embryo stages, present in all tissues except root tips.</text>
</comment>
<comment type="disruption phenotype">
    <text evidence="7 8">Reduced plastidial pyruvate kinase activity and altered seed oil content leading to wrinkled seeds, retarded embryo elongation and reduced seed germination.</text>
</comment>
<comment type="similarity">
    <text evidence="11">Belongs to the pyruvate kinase family.</text>
</comment>
<gene>
    <name type="primary">PKP2</name>
    <name type="synonym">PKP1</name>
    <name type="ordered locus">At5g52920</name>
    <name type="ORF">MXC20.15</name>
</gene>
<keyword id="KW-0067">ATP-binding</keyword>
<keyword id="KW-0150">Chloroplast</keyword>
<keyword id="KW-0324">Glycolysis</keyword>
<keyword id="KW-0418">Kinase</keyword>
<keyword id="KW-0460">Magnesium</keyword>
<keyword id="KW-0479">Metal-binding</keyword>
<keyword id="KW-0496">Mitochondrion</keyword>
<keyword id="KW-0547">Nucleotide-binding</keyword>
<keyword id="KW-0934">Plastid</keyword>
<keyword id="KW-0630">Potassium</keyword>
<keyword id="KW-0670">Pyruvate</keyword>
<keyword id="KW-1185">Reference proteome</keyword>
<keyword id="KW-0808">Transferase</keyword>
<keyword id="KW-0809">Transit peptide</keyword>
<proteinExistence type="evidence at protein level"/>
<protein>
    <recommendedName>
        <fullName>Plastidial pyruvate kinase 2</fullName>
        <shortName>PKp2</shortName>
        <ecNumber>2.7.1.40</ecNumber>
    </recommendedName>
    <alternativeName>
        <fullName>Plastidial pyruvate kinase 1</fullName>
        <shortName>PKP1</shortName>
    </alternativeName>
    <alternativeName>
        <fullName>Pyruvate kinase III</fullName>
    </alternativeName>
    <alternativeName>
        <fullName>Pyruvate kinase isozyme B1, chloroplastic</fullName>
        <shortName>PKP-BETA1</shortName>
        <shortName>Plastidic pyruvate kinase beta subunit 1</shortName>
    </alternativeName>
</protein>
<feature type="transit peptide" description="Chloroplast" evidence="4">
    <location>
        <begin position="1"/>
        <end position="63"/>
    </location>
</feature>
<feature type="chain" id="PRO_0000416988" description="Plastidial pyruvate kinase 2">
    <location>
        <begin position="64"/>
        <end position="579"/>
    </location>
</feature>
<feature type="region of interest" description="Disordered" evidence="5">
    <location>
        <begin position="6"/>
        <end position="26"/>
    </location>
</feature>
<feature type="compositionally biased region" description="Polar residues" evidence="5">
    <location>
        <begin position="6"/>
        <end position="24"/>
    </location>
</feature>
<feature type="binding site" evidence="3">
    <location>
        <position position="140"/>
    </location>
    <ligand>
        <name>substrate</name>
    </ligand>
</feature>
<feature type="binding site" evidence="2">
    <location>
        <begin position="142"/>
        <end position="145"/>
    </location>
    <ligand>
        <name>ATP</name>
        <dbReference type="ChEBI" id="CHEBI:30616"/>
    </ligand>
</feature>
<feature type="binding site" evidence="3">
    <location>
        <position position="142"/>
    </location>
    <ligand>
        <name>K(+)</name>
        <dbReference type="ChEBI" id="CHEBI:29103"/>
    </ligand>
</feature>
<feature type="binding site" evidence="3">
    <location>
        <position position="144"/>
    </location>
    <ligand>
        <name>K(+)</name>
        <dbReference type="ChEBI" id="CHEBI:29103"/>
    </ligand>
</feature>
<feature type="binding site" evidence="3">
    <location>
        <position position="175"/>
    </location>
    <ligand>
        <name>K(+)</name>
        <dbReference type="ChEBI" id="CHEBI:29103"/>
    </ligand>
</feature>
<feature type="binding site" evidence="3">
    <location>
        <position position="176"/>
    </location>
    <ligand>
        <name>K(+)</name>
        <dbReference type="ChEBI" id="CHEBI:29103"/>
    </ligand>
</feature>
<feature type="binding site" evidence="2">
    <location>
        <position position="182"/>
    </location>
    <ligand>
        <name>ATP</name>
        <dbReference type="ChEBI" id="CHEBI:30616"/>
    </ligand>
</feature>
<feature type="binding site" evidence="3">
    <location>
        <position position="325"/>
    </location>
    <ligand>
        <name>substrate</name>
    </ligand>
</feature>
<feature type="binding site" evidence="2">
    <location>
        <position position="327"/>
    </location>
    <ligand>
        <name>Mg(2+)</name>
        <dbReference type="ChEBI" id="CHEBI:18420"/>
    </ligand>
</feature>
<feature type="binding site" evidence="3">
    <location>
        <position position="350"/>
    </location>
    <ligand>
        <name>substrate</name>
    </ligand>
</feature>
<feature type="binding site" evidence="2">
    <location>
        <position position="351"/>
    </location>
    <ligand>
        <name>Mg(2+)</name>
        <dbReference type="ChEBI" id="CHEBI:18420"/>
    </ligand>
</feature>
<feature type="binding site" evidence="3">
    <location>
        <position position="351"/>
    </location>
    <ligand>
        <name>substrate</name>
    </ligand>
</feature>
<feature type="binding site" evidence="3">
    <location>
        <position position="383"/>
    </location>
    <ligand>
        <name>substrate</name>
    </ligand>
</feature>
<feature type="site" description="Transition state stabilizer" evidence="1">
    <location>
        <position position="325"/>
    </location>
</feature>
<feature type="sequence conflict" description="In Ref. 3; AAK82461/AAM10281." evidence="11" ref="3">
    <original>S</original>
    <variation>P</variation>
    <location>
        <position position="342"/>
    </location>
</feature>
<feature type="sequence conflict" description="In Ref. 4; BAD93771." evidence="11" ref="4">
    <original>T</original>
    <variation>A</variation>
    <location>
        <position position="383"/>
    </location>
</feature>
<accession>Q9FLW9</accession>
<accession>Q56XD5</accession>
<accession>Q56ZT8</accession>
<accession>Q570A3</accession>
<accession>Q94AG4</accession>
<reference key="1">
    <citation type="journal article" date="1998" name="DNA Res.">
        <title>Structural analysis of Arabidopsis thaliana chromosome 5. IV. Sequence features of the regions of 1,456,315 bp covered by nineteen physically assigned P1 and TAC clones.</title>
        <authorList>
            <person name="Sato S."/>
            <person name="Kaneko T."/>
            <person name="Kotani H."/>
            <person name="Nakamura Y."/>
            <person name="Asamizu E."/>
            <person name="Miyajima N."/>
            <person name="Tabata S."/>
        </authorList>
    </citation>
    <scope>NUCLEOTIDE SEQUENCE [LARGE SCALE GENOMIC DNA]</scope>
    <source>
        <strain>cv. Columbia</strain>
    </source>
</reference>
<reference key="2">
    <citation type="journal article" date="2017" name="Plant J.">
        <title>Araport11: a complete reannotation of the Arabidopsis thaliana reference genome.</title>
        <authorList>
            <person name="Cheng C.Y."/>
            <person name="Krishnakumar V."/>
            <person name="Chan A.P."/>
            <person name="Thibaud-Nissen F."/>
            <person name="Schobel S."/>
            <person name="Town C.D."/>
        </authorList>
    </citation>
    <scope>GENOME REANNOTATION</scope>
    <source>
        <strain>cv. Columbia</strain>
    </source>
</reference>
<reference key="3">
    <citation type="journal article" date="2003" name="Science">
        <title>Empirical analysis of transcriptional activity in the Arabidopsis genome.</title>
        <authorList>
            <person name="Yamada K."/>
            <person name="Lim J."/>
            <person name="Dale J.M."/>
            <person name="Chen H."/>
            <person name="Shinn P."/>
            <person name="Palm C.J."/>
            <person name="Southwick A.M."/>
            <person name="Wu H.C."/>
            <person name="Kim C.J."/>
            <person name="Nguyen M."/>
            <person name="Pham P.K."/>
            <person name="Cheuk R.F."/>
            <person name="Karlin-Newmann G."/>
            <person name="Liu S.X."/>
            <person name="Lam B."/>
            <person name="Sakano H."/>
            <person name="Wu T."/>
            <person name="Yu G."/>
            <person name="Miranda M."/>
            <person name="Quach H.L."/>
            <person name="Tripp M."/>
            <person name="Chang C.H."/>
            <person name="Lee J.M."/>
            <person name="Toriumi M.J."/>
            <person name="Chan M.M."/>
            <person name="Tang C.C."/>
            <person name="Onodera C.S."/>
            <person name="Deng J.M."/>
            <person name="Akiyama K."/>
            <person name="Ansari Y."/>
            <person name="Arakawa T."/>
            <person name="Banh J."/>
            <person name="Banno F."/>
            <person name="Bowser L."/>
            <person name="Brooks S.Y."/>
            <person name="Carninci P."/>
            <person name="Chao Q."/>
            <person name="Choy N."/>
            <person name="Enju A."/>
            <person name="Goldsmith A.D."/>
            <person name="Gurjal M."/>
            <person name="Hansen N.F."/>
            <person name="Hayashizaki Y."/>
            <person name="Johnson-Hopson C."/>
            <person name="Hsuan V.W."/>
            <person name="Iida K."/>
            <person name="Karnes M."/>
            <person name="Khan S."/>
            <person name="Koesema E."/>
            <person name="Ishida J."/>
            <person name="Jiang P.X."/>
            <person name="Jones T."/>
            <person name="Kawai J."/>
            <person name="Kamiya A."/>
            <person name="Meyers C."/>
            <person name="Nakajima M."/>
            <person name="Narusaka M."/>
            <person name="Seki M."/>
            <person name="Sakurai T."/>
            <person name="Satou M."/>
            <person name="Tamse R."/>
            <person name="Vaysberg M."/>
            <person name="Wallender E.K."/>
            <person name="Wong C."/>
            <person name="Yamamura Y."/>
            <person name="Yuan S."/>
            <person name="Shinozaki K."/>
            <person name="Davis R.W."/>
            <person name="Theologis A."/>
            <person name="Ecker J.R."/>
        </authorList>
    </citation>
    <scope>NUCLEOTIDE SEQUENCE [LARGE SCALE MRNA]</scope>
    <source>
        <strain>cv. Columbia</strain>
    </source>
</reference>
<reference key="4">
    <citation type="submission" date="2005-03" db="EMBL/GenBank/DDBJ databases">
        <title>Large-scale analysis of RIKEN Arabidopsis full-length (RAFL) cDNAs.</title>
        <authorList>
            <person name="Totoki Y."/>
            <person name="Seki M."/>
            <person name="Ishida J."/>
            <person name="Nakajima M."/>
            <person name="Enju A."/>
            <person name="Kamiya A."/>
            <person name="Narusaka M."/>
            <person name="Shin-i T."/>
            <person name="Nakagawa M."/>
            <person name="Sakamoto N."/>
            <person name="Oishi K."/>
            <person name="Kohara Y."/>
            <person name="Kobayashi M."/>
            <person name="Toyoda A."/>
            <person name="Sakaki Y."/>
            <person name="Sakurai T."/>
            <person name="Iida K."/>
            <person name="Akiyama K."/>
            <person name="Satou M."/>
            <person name="Toyoda T."/>
            <person name="Konagaya A."/>
            <person name="Carninci P."/>
            <person name="Kawai J."/>
            <person name="Hayashizaki Y."/>
            <person name="Shinozaki K."/>
        </authorList>
    </citation>
    <scope>NUCLEOTIDE SEQUENCE [LARGE SCALE MRNA]</scope>
    <source>
        <strain>cv. Columbia</strain>
    </source>
</reference>
<reference key="5">
    <citation type="submission" date="2002-03" db="EMBL/GenBank/DDBJ databases">
        <title>Full-length cDNA from Arabidopsis thaliana.</title>
        <authorList>
            <person name="Brover V.V."/>
            <person name="Troukhan M.E."/>
            <person name="Alexandrov N.A."/>
            <person name="Lu Y.-P."/>
            <person name="Flavell R.B."/>
            <person name="Feldmann K.A."/>
        </authorList>
    </citation>
    <scope>NUCLEOTIDE SEQUENCE [LARGE SCALE MRNA]</scope>
</reference>
<reference key="6">
    <citation type="journal article" date="2003" name="Plant Cell">
        <title>Enzymes of glycolysis are functionally associated with the mitochondrion in Arabidopsis cells.</title>
        <authorList>
            <person name="Giege P."/>
            <person name="Heazlewood J.L."/>
            <person name="Roessner-Tunali U."/>
            <person name="Millar A.H."/>
            <person name="Fernie A.R."/>
            <person name="Leaver C.J."/>
            <person name="Sweetlove L.J."/>
        </authorList>
    </citation>
    <scope>IDENTIFICATION BY MASS SPECTROMETRY</scope>
    <scope>SUBCELLULAR LOCATION [LARGE SCALE ANALYSIS]</scope>
</reference>
<reference key="7">
    <citation type="journal article" date="2007" name="Plant Cell">
        <title>A heteromeric plastidic pyruvate kinase complex involved in seed oil biosynthesis in Arabidopsis.</title>
        <authorList>
            <person name="Andre C."/>
            <person name="Froehlich J.E."/>
            <person name="Moll M.R."/>
            <person name="Benning C."/>
        </authorList>
    </citation>
    <scope>FUNCTION</scope>
    <scope>DISRUPTION PHENOTYPE</scope>
    <scope>TISSUE SPECIFICITY</scope>
    <scope>SUBUNIT</scope>
    <scope>SUBCELLULAR LOCATION</scope>
    <scope>COFACTOR</scope>
    <scope>BIOPHYSICOCHEMICAL PROPERTIES</scope>
    <scope>GENE FAMILY</scope>
</reference>
<reference key="8">
    <citation type="journal article" date="2007" name="Plant J.">
        <title>Function of plastidial pyruvate kinases in seeds of Arabidopsis thaliana.</title>
        <authorList>
            <person name="Baud S."/>
            <person name="Wuilleme S."/>
            <person name="Dubreucq B."/>
            <person name="de Almeida A."/>
            <person name="Vuagnat C."/>
            <person name="Lepiniec L."/>
            <person name="Miquel M."/>
            <person name="Rochat C."/>
        </authorList>
    </citation>
    <scope>FUNCTION</scope>
    <scope>DISRUPTION PHENOTYPE</scope>
    <scope>TISSUE SPECIFICITY</scope>
    <scope>DEVELOPMENTAL STAGE</scope>
    <scope>SUBCELLULAR LOCATION</scope>
    <scope>BIOPHYSICOCHEMICAL PROPERTIES</scope>
    <scope>GENE FAMILY</scope>
    <scope>NOMENCLATURE</scope>
    <source>
        <strain>cv. Columbia</strain>
        <strain>cv. Wassilewskija</strain>
    </source>
</reference>
<reference key="9">
    <citation type="journal article" date="2007" name="Plant Physiol.">
        <title>Arabidopsis seedlings deficient in a plastidic pyruvate kinase are unable to utilize seed storage compounds for germination and establishment.</title>
        <authorList>
            <person name="Andre C."/>
            <person name="Benning C."/>
        </authorList>
    </citation>
    <scope>FUNCTION</scope>
</reference>
<reference key="10">
    <citation type="journal article" date="2008" name="PLoS ONE">
        <title>Sorting signals, N-terminal modifications and abundance of the chloroplast proteome.</title>
        <authorList>
            <person name="Zybailov B."/>
            <person name="Rutschow H."/>
            <person name="Friso G."/>
            <person name="Rudella A."/>
            <person name="Emanuelsson O."/>
            <person name="Sun Q."/>
            <person name="van Wijk K.J."/>
        </authorList>
    </citation>
    <scope>IDENTIFICATION BY MASS SPECTROMETRY</scope>
    <scope>SUBCELLULAR LOCATION [LARGE SCALE ANALYSIS]</scope>
</reference>
<name>PKP2_ARATH</name>
<sequence length="579" mass="63522">MAQVVATRSIQGSMLSPNGGSVSTRSEKLLKPASFAVKVLGNEAKRSGRVSVRSRRVVDTTVRSARVETEVIPVSPEDVPNREEQLERLLEMQQFGDTSVGMWSKPTVRRKTKIVCTVGPSTNTREMIWKLAEAGMNVARMNMSHGDHASHKKVIDLVKEYNAQTKDNTIAIMLDTKGPEVRSGDLPQPIMLDPGQEFTFTIERGVSTPSCVSVNYDDFVNDVEAGDMLLVDGGMMSFMVKSKTKDSVKCEVVDGGELKSRRHLNVRGKSATLPSITEKDWEDIKFGVENKVDFYAVSFVKDAQVVHELKKYLQNSGADIHVIVKIESADSIPNLHSIITASDGAMVARGDLGAELPIEEVPILQEEIINLCRSMGKAVIVATNMLESMIVHPTPTRAEVSDIAIAVREGADAVMLSGETAHGKFPLKAAGVMHTVALRTEATITSGEMPPNLGQAFKNHMSEMFAYHATMMSNTLGTSTVVFTRTGFMAILLSHYRPSGTIYAFTNEKKIQQRLALYQGVCPIYMEFTDDAEETFANALATLLKQGMVKKGEEIAIVQSGTQPIWRSQSTHNIQVRKV</sequence>
<evidence type="ECO:0000250" key="1">
    <source>
        <dbReference type="UniProtKB" id="P00549"/>
    </source>
</evidence>
<evidence type="ECO:0000250" key="2">
    <source>
        <dbReference type="UniProtKB" id="P14618"/>
    </source>
</evidence>
<evidence type="ECO:0000250" key="3">
    <source>
        <dbReference type="UniProtKB" id="P30613"/>
    </source>
</evidence>
<evidence type="ECO:0000255" key="4"/>
<evidence type="ECO:0000256" key="5">
    <source>
        <dbReference type="SAM" id="MobiDB-lite"/>
    </source>
</evidence>
<evidence type="ECO:0000269" key="6">
    <source>
    </source>
</evidence>
<evidence type="ECO:0000269" key="7">
    <source>
    </source>
</evidence>
<evidence type="ECO:0000269" key="8">
    <source>
    </source>
</evidence>
<evidence type="ECO:0000269" key="9">
    <source>
    </source>
</evidence>
<evidence type="ECO:0000269" key="10">
    <source>
    </source>
</evidence>
<evidence type="ECO:0000305" key="11"/>